<protein>
    <recommendedName>
        <fullName>Growth/differentiation factor 8</fullName>
        <shortName>GDF-8</shortName>
    </recommendedName>
    <alternativeName>
        <fullName>Myostatin</fullName>
    </alternativeName>
</protein>
<comment type="function">
    <text evidence="1">Acts specifically as a negative regulator of skeletal muscle growth.</text>
</comment>
<comment type="subunit">
    <text evidence="1">Homodimer; disulfide-linked. Interacts with WFIKKN2, leading to inhibit its activity. Interacts with FSTL3.</text>
</comment>
<comment type="subcellular location">
    <subcellularLocation>
        <location evidence="1">Secreted</location>
    </subcellularLocation>
</comment>
<comment type="PTM">
    <text evidence="1">Synthesized as large precursor molecule that undergoes proteolytic cleavage to generate an N-terminal propeptide and a disulfide linked C-terminal dimer, which is the biologically active molecule. The circulating form consists of a latent complex of the C-terminal dimer and other proteins, including its propeptide, which maintain the C-terminal dimer in a latent, inactive state. Ligand activation requires additional cleavage of the prodomain by a tolloid-like metalloproteinase.</text>
</comment>
<comment type="similarity">
    <text evidence="4">Belongs to the TGF-beta family.</text>
</comment>
<accession>Q95J86</accession>
<feature type="signal peptide" evidence="3">
    <location>
        <begin position="1"/>
        <end position="18"/>
    </location>
</feature>
<feature type="propeptide" id="PRO_0000033954" evidence="3">
    <location>
        <begin position="19"/>
        <end position="266"/>
    </location>
</feature>
<feature type="chain" id="PRO_0000033955" description="Growth/differentiation factor 8">
    <location>
        <begin position="267"/>
        <end position="375"/>
    </location>
</feature>
<feature type="site" description="Cleavage" evidence="1">
    <location>
        <begin position="98"/>
        <end position="99"/>
    </location>
</feature>
<feature type="glycosylation site" description="N-linked (GlcNAc...) asparagine" evidence="3">
    <location>
        <position position="71"/>
    </location>
</feature>
<feature type="disulfide bond" evidence="2">
    <location>
        <begin position="272"/>
        <end position="282"/>
    </location>
</feature>
<feature type="disulfide bond" evidence="2">
    <location>
        <begin position="281"/>
        <end position="340"/>
    </location>
</feature>
<feature type="disulfide bond" evidence="2">
    <location>
        <begin position="309"/>
        <end position="372"/>
    </location>
</feature>
<feature type="disulfide bond" evidence="2">
    <location>
        <begin position="313"/>
        <end position="374"/>
    </location>
</feature>
<feature type="disulfide bond" description="Interchain" evidence="2">
    <location>
        <position position="339"/>
    </location>
</feature>
<organism>
    <name type="scientific">Macaca fascicularis</name>
    <name type="common">Crab-eating macaque</name>
    <name type="synonym">Cynomolgus monkey</name>
    <dbReference type="NCBI Taxonomy" id="9541"/>
    <lineage>
        <taxon>Eukaryota</taxon>
        <taxon>Metazoa</taxon>
        <taxon>Chordata</taxon>
        <taxon>Craniata</taxon>
        <taxon>Vertebrata</taxon>
        <taxon>Euteleostomi</taxon>
        <taxon>Mammalia</taxon>
        <taxon>Eutheria</taxon>
        <taxon>Euarchontoglires</taxon>
        <taxon>Primates</taxon>
        <taxon>Haplorrhini</taxon>
        <taxon>Catarrhini</taxon>
        <taxon>Cercopithecidae</taxon>
        <taxon>Cercopithecinae</taxon>
        <taxon>Macaca</taxon>
    </lineage>
</organism>
<reference key="1">
    <citation type="submission" date="2001-09" db="EMBL/GenBank/DDBJ databases">
        <title>Cloning of the open reading frame DNA for macaque fascicularis (cynomolgus macaque) myostatin (GDF8).</title>
        <authorList>
            <person name="Smock S.L."/>
            <person name="Owen T.A."/>
        </authorList>
    </citation>
    <scope>NUCLEOTIDE SEQUENCE [MRNA]</scope>
    <source>
        <tissue>Gastrocnemius</tissue>
    </source>
</reference>
<keyword id="KW-0165">Cleavage on pair of basic residues</keyword>
<keyword id="KW-0202">Cytokine</keyword>
<keyword id="KW-1015">Disulfide bond</keyword>
<keyword id="KW-0325">Glycoprotein</keyword>
<keyword id="KW-0339">Growth factor</keyword>
<keyword id="KW-0358">Heparin-binding</keyword>
<keyword id="KW-1185">Reference proteome</keyword>
<keyword id="KW-0964">Secreted</keyword>
<keyword id="KW-0732">Signal</keyword>
<name>GDF8_MACFA</name>
<gene>
    <name type="primary">MSTN</name>
    <name type="synonym">GDF8</name>
</gene>
<evidence type="ECO:0000250" key="1">
    <source>
        <dbReference type="UniProtKB" id="O08689"/>
    </source>
</evidence>
<evidence type="ECO:0000250" key="2">
    <source>
        <dbReference type="UniProtKB" id="O14793"/>
    </source>
</evidence>
<evidence type="ECO:0000255" key="3"/>
<evidence type="ECO:0000305" key="4"/>
<sequence>MQKLQLCVYIYLFMLIVAGPVDLNENSEQKENVEKEGLCNACTWRQNTKSSRIEAIKIQILSKLRLETAPNISKDAIRQLLPKAPPLRELIDQYDVQRDDSSDGSLEDDDYHATTETIITMPTESDFLMQVDGKPKCCFFKFSSKIQYNKVVKAQLWIYLRPVETPTTVFVQILRLIKPMKDGTRYTGIRSLKLDMNPGTGIWQSIDVKTVLQNWLKQPESNLGIEIKALDENGHDLAVTFPGPGEDGLNPFLEVKVTDTPKRSRRDFGLDCDEHSTESRCCRYPLTVDFEAFGWDWIIAPKRYKANYCSGECEFVFLQKYPHTHLVHQANPRGSAGPCCTPTKMSPINMLYFNGKEQIIYGKIPAMVVDRCGCS</sequence>
<dbReference type="EMBL" id="AY055750">
    <property type="protein sequence ID" value="AAL17640.1"/>
    <property type="molecule type" value="mRNA"/>
</dbReference>
<dbReference type="RefSeq" id="NP_001274552.1">
    <property type="nucleotide sequence ID" value="NM_001287623.1"/>
</dbReference>
<dbReference type="RefSeq" id="XP_045223337.1">
    <property type="nucleotide sequence ID" value="XM_045367402.2"/>
</dbReference>
<dbReference type="SMR" id="Q95J86"/>
<dbReference type="STRING" id="9541.ENSMFAP00000013231"/>
<dbReference type="GlyCosmos" id="Q95J86">
    <property type="glycosylation" value="1 site, No reported glycans"/>
</dbReference>
<dbReference type="ABCD" id="Q95J86">
    <property type="antibodies" value="2 sequenced antibodies"/>
</dbReference>
<dbReference type="Ensembl" id="ENSMFAT00000062533.2">
    <property type="protein sequence ID" value="ENSMFAP00000013231.2"/>
    <property type="gene ID" value="ENSMFAG00000027935.2"/>
</dbReference>
<dbReference type="GeneID" id="102141305"/>
<dbReference type="eggNOG" id="KOG3900">
    <property type="taxonomic scope" value="Eukaryota"/>
</dbReference>
<dbReference type="GeneTree" id="ENSGT00940000160657"/>
<dbReference type="OMA" id="CNACMWR"/>
<dbReference type="Proteomes" id="UP000233100">
    <property type="component" value="Chromosome 12"/>
</dbReference>
<dbReference type="Bgee" id="ENSMFAG00000027935">
    <property type="expression patterns" value="Expressed in skeletal muscle tissue and 1 other cell type or tissue"/>
</dbReference>
<dbReference type="GO" id="GO:0005615">
    <property type="term" value="C:extracellular space"/>
    <property type="evidence" value="ECO:0007669"/>
    <property type="project" value="UniProtKB-KW"/>
</dbReference>
<dbReference type="GO" id="GO:0005125">
    <property type="term" value="F:cytokine activity"/>
    <property type="evidence" value="ECO:0007669"/>
    <property type="project" value="UniProtKB-KW"/>
</dbReference>
<dbReference type="GO" id="GO:0008083">
    <property type="term" value="F:growth factor activity"/>
    <property type="evidence" value="ECO:0007669"/>
    <property type="project" value="UniProtKB-KW"/>
</dbReference>
<dbReference type="GO" id="GO:0008201">
    <property type="term" value="F:heparin binding"/>
    <property type="evidence" value="ECO:0007669"/>
    <property type="project" value="UniProtKB-KW"/>
</dbReference>
<dbReference type="GO" id="GO:0042802">
    <property type="term" value="F:identical protein binding"/>
    <property type="evidence" value="ECO:0000250"/>
    <property type="project" value="UniProtKB"/>
</dbReference>
<dbReference type="GO" id="GO:0042803">
    <property type="term" value="F:protein homodimerization activity"/>
    <property type="evidence" value="ECO:0007669"/>
    <property type="project" value="Ensembl"/>
</dbReference>
<dbReference type="GO" id="GO:0043539">
    <property type="term" value="F:protein serine/threonine kinase activator activity"/>
    <property type="evidence" value="ECO:0007669"/>
    <property type="project" value="Ensembl"/>
</dbReference>
<dbReference type="GO" id="GO:0071549">
    <property type="term" value="P:cellular response to dexamethasone stimulus"/>
    <property type="evidence" value="ECO:0007669"/>
    <property type="project" value="Ensembl"/>
</dbReference>
<dbReference type="GO" id="GO:0046716">
    <property type="term" value="P:muscle cell cellular homeostasis"/>
    <property type="evidence" value="ECO:0007669"/>
    <property type="project" value="Ensembl"/>
</dbReference>
<dbReference type="GO" id="GO:0014839">
    <property type="term" value="P:myoblast migration involved in skeletal muscle regeneration"/>
    <property type="evidence" value="ECO:0000250"/>
    <property type="project" value="UniProtKB"/>
</dbReference>
<dbReference type="GO" id="GO:0046627">
    <property type="term" value="P:negative regulation of insulin receptor signaling pathway"/>
    <property type="evidence" value="ECO:0007669"/>
    <property type="project" value="Ensembl"/>
</dbReference>
<dbReference type="GO" id="GO:0045662">
    <property type="term" value="P:negative regulation of myoblast differentiation"/>
    <property type="evidence" value="ECO:0007669"/>
    <property type="project" value="Ensembl"/>
</dbReference>
<dbReference type="GO" id="GO:2000818">
    <property type="term" value="P:negative regulation of myoblast proliferation"/>
    <property type="evidence" value="ECO:0000250"/>
    <property type="project" value="AgBase"/>
</dbReference>
<dbReference type="GO" id="GO:0051898">
    <property type="term" value="P:negative regulation of phosphatidylinositol 3-kinase/protein kinase B signal transduction"/>
    <property type="evidence" value="ECO:0007669"/>
    <property type="project" value="Ensembl"/>
</dbReference>
<dbReference type="GO" id="GO:1902725">
    <property type="term" value="P:negative regulation of satellite cell differentiation"/>
    <property type="evidence" value="ECO:0000250"/>
    <property type="project" value="AgBase"/>
</dbReference>
<dbReference type="GO" id="GO:1902723">
    <property type="term" value="P:negative regulation of skeletal muscle satellite cell proliferation"/>
    <property type="evidence" value="ECO:0000250"/>
    <property type="project" value="AgBase"/>
</dbReference>
<dbReference type="GO" id="GO:0048632">
    <property type="term" value="P:negative regulation of skeletal muscle tissue growth"/>
    <property type="evidence" value="ECO:0007669"/>
    <property type="project" value="Ensembl"/>
</dbReference>
<dbReference type="GO" id="GO:0045893">
    <property type="term" value="P:positive regulation of DNA-templated transcription"/>
    <property type="evidence" value="ECO:0007669"/>
    <property type="project" value="Ensembl"/>
</dbReference>
<dbReference type="GO" id="GO:0010592">
    <property type="term" value="P:positive regulation of lamellipodium assembly"/>
    <property type="evidence" value="ECO:0000250"/>
    <property type="project" value="UniProtKB"/>
</dbReference>
<dbReference type="GO" id="GO:0010759">
    <property type="term" value="P:positive regulation of macrophage chemotaxis"/>
    <property type="evidence" value="ECO:0000250"/>
    <property type="project" value="UniProtKB"/>
</dbReference>
<dbReference type="GO" id="GO:0014816">
    <property type="term" value="P:skeletal muscle satellite cell differentiation"/>
    <property type="evidence" value="ECO:0007669"/>
    <property type="project" value="Ensembl"/>
</dbReference>
<dbReference type="GO" id="GO:0007179">
    <property type="term" value="P:transforming growth factor beta receptor signaling pathway"/>
    <property type="evidence" value="ECO:0007669"/>
    <property type="project" value="Ensembl"/>
</dbReference>
<dbReference type="CDD" id="cd19388">
    <property type="entry name" value="TGF_beta_GDF8"/>
    <property type="match status" value="1"/>
</dbReference>
<dbReference type="FunFam" id="2.60.120.970:FF:000001">
    <property type="entry name" value="Growth/differentiation factor 8"/>
    <property type="match status" value="1"/>
</dbReference>
<dbReference type="FunFam" id="2.10.90.10:FF:000006">
    <property type="entry name" value="growth/differentiation factor 8"/>
    <property type="match status" value="1"/>
</dbReference>
<dbReference type="Gene3D" id="2.60.120.970">
    <property type="match status" value="1"/>
</dbReference>
<dbReference type="Gene3D" id="2.10.90.10">
    <property type="entry name" value="Cystine-knot cytokines"/>
    <property type="match status" value="1"/>
</dbReference>
<dbReference type="InterPro" id="IPR029034">
    <property type="entry name" value="Cystine-knot_cytokine"/>
</dbReference>
<dbReference type="InterPro" id="IPR001839">
    <property type="entry name" value="TGF-b_C"/>
</dbReference>
<dbReference type="InterPro" id="IPR001111">
    <property type="entry name" value="TGF-b_propeptide"/>
</dbReference>
<dbReference type="InterPro" id="IPR015615">
    <property type="entry name" value="TGF-beta-rel"/>
</dbReference>
<dbReference type="InterPro" id="IPR017948">
    <property type="entry name" value="TGFb_CS"/>
</dbReference>
<dbReference type="PANTHER" id="PTHR11848:SF150">
    <property type="entry name" value="GROWTH_DIFFERENTIATION FACTOR 8"/>
    <property type="match status" value="1"/>
</dbReference>
<dbReference type="PANTHER" id="PTHR11848">
    <property type="entry name" value="TGF-BETA FAMILY"/>
    <property type="match status" value="1"/>
</dbReference>
<dbReference type="Pfam" id="PF00019">
    <property type="entry name" value="TGF_beta"/>
    <property type="match status" value="1"/>
</dbReference>
<dbReference type="Pfam" id="PF00688">
    <property type="entry name" value="TGFb_propeptide"/>
    <property type="match status" value="1"/>
</dbReference>
<dbReference type="SMART" id="SM00204">
    <property type="entry name" value="TGFB"/>
    <property type="match status" value="1"/>
</dbReference>
<dbReference type="SUPFAM" id="SSF57501">
    <property type="entry name" value="Cystine-knot cytokines"/>
    <property type="match status" value="1"/>
</dbReference>
<dbReference type="PROSITE" id="PS00250">
    <property type="entry name" value="TGF_BETA_1"/>
    <property type="match status" value="1"/>
</dbReference>
<dbReference type="PROSITE" id="PS51362">
    <property type="entry name" value="TGF_BETA_2"/>
    <property type="match status" value="1"/>
</dbReference>
<proteinExistence type="evidence at transcript level"/>